<organism>
    <name type="scientific">Brucella canis (strain ATCC 23365 / NCTC 10854 / RM-666)</name>
    <dbReference type="NCBI Taxonomy" id="483179"/>
    <lineage>
        <taxon>Bacteria</taxon>
        <taxon>Pseudomonadati</taxon>
        <taxon>Pseudomonadota</taxon>
        <taxon>Alphaproteobacteria</taxon>
        <taxon>Hyphomicrobiales</taxon>
        <taxon>Brucellaceae</taxon>
        <taxon>Brucella/Ochrobactrum group</taxon>
        <taxon>Brucella</taxon>
    </lineage>
</organism>
<proteinExistence type="inferred from homology"/>
<dbReference type="EC" id="2.7.2.8" evidence="1"/>
<dbReference type="EMBL" id="CP000873">
    <property type="protein sequence ID" value="ABX64188.1"/>
    <property type="molecule type" value="Genomic_DNA"/>
</dbReference>
<dbReference type="RefSeq" id="WP_004687040.1">
    <property type="nucleotide sequence ID" value="NC_010104.1"/>
</dbReference>
<dbReference type="SMR" id="A9MCV1"/>
<dbReference type="GeneID" id="97534925"/>
<dbReference type="KEGG" id="bcs:BCAN_B1046"/>
<dbReference type="HOGENOM" id="CLU_053680_0_0_5"/>
<dbReference type="UniPathway" id="UPA00068">
    <property type="reaction ID" value="UER00107"/>
</dbReference>
<dbReference type="Proteomes" id="UP000001385">
    <property type="component" value="Chromosome II"/>
</dbReference>
<dbReference type="GO" id="GO:0005737">
    <property type="term" value="C:cytoplasm"/>
    <property type="evidence" value="ECO:0007669"/>
    <property type="project" value="UniProtKB-SubCell"/>
</dbReference>
<dbReference type="GO" id="GO:0003991">
    <property type="term" value="F:acetylglutamate kinase activity"/>
    <property type="evidence" value="ECO:0007669"/>
    <property type="project" value="UniProtKB-UniRule"/>
</dbReference>
<dbReference type="GO" id="GO:0005524">
    <property type="term" value="F:ATP binding"/>
    <property type="evidence" value="ECO:0007669"/>
    <property type="project" value="UniProtKB-UniRule"/>
</dbReference>
<dbReference type="GO" id="GO:0042450">
    <property type="term" value="P:arginine biosynthetic process via ornithine"/>
    <property type="evidence" value="ECO:0007669"/>
    <property type="project" value="UniProtKB-UniRule"/>
</dbReference>
<dbReference type="GO" id="GO:0006526">
    <property type="term" value="P:L-arginine biosynthetic process"/>
    <property type="evidence" value="ECO:0007669"/>
    <property type="project" value="UniProtKB-UniPathway"/>
</dbReference>
<dbReference type="CDD" id="cd04250">
    <property type="entry name" value="AAK_NAGK-C"/>
    <property type="match status" value="1"/>
</dbReference>
<dbReference type="FunFam" id="3.40.1160.10:FF:000004">
    <property type="entry name" value="Acetylglutamate kinase"/>
    <property type="match status" value="1"/>
</dbReference>
<dbReference type="Gene3D" id="3.40.1160.10">
    <property type="entry name" value="Acetylglutamate kinase-like"/>
    <property type="match status" value="1"/>
</dbReference>
<dbReference type="HAMAP" id="MF_00082">
    <property type="entry name" value="ArgB"/>
    <property type="match status" value="1"/>
</dbReference>
<dbReference type="InterPro" id="IPR036393">
    <property type="entry name" value="AceGlu_kinase-like_sf"/>
</dbReference>
<dbReference type="InterPro" id="IPR004662">
    <property type="entry name" value="AcgluKinase_fam"/>
</dbReference>
<dbReference type="InterPro" id="IPR037528">
    <property type="entry name" value="ArgB"/>
</dbReference>
<dbReference type="InterPro" id="IPR001048">
    <property type="entry name" value="Asp/Glu/Uridylate_kinase"/>
</dbReference>
<dbReference type="InterPro" id="IPR041727">
    <property type="entry name" value="NAGK-C"/>
</dbReference>
<dbReference type="NCBIfam" id="TIGR00761">
    <property type="entry name" value="argB"/>
    <property type="match status" value="1"/>
</dbReference>
<dbReference type="PANTHER" id="PTHR23342">
    <property type="entry name" value="N-ACETYLGLUTAMATE SYNTHASE"/>
    <property type="match status" value="1"/>
</dbReference>
<dbReference type="PANTHER" id="PTHR23342:SF0">
    <property type="entry name" value="N-ACETYLGLUTAMATE SYNTHASE, MITOCHONDRIAL"/>
    <property type="match status" value="1"/>
</dbReference>
<dbReference type="Pfam" id="PF00696">
    <property type="entry name" value="AA_kinase"/>
    <property type="match status" value="1"/>
</dbReference>
<dbReference type="PIRSF" id="PIRSF000728">
    <property type="entry name" value="NAGK"/>
    <property type="match status" value="1"/>
</dbReference>
<dbReference type="SUPFAM" id="SSF53633">
    <property type="entry name" value="Carbamate kinase-like"/>
    <property type="match status" value="1"/>
</dbReference>
<name>ARGB_BRUC2</name>
<protein>
    <recommendedName>
        <fullName evidence="1">Acetylglutamate kinase</fullName>
        <ecNumber evidence="1">2.7.2.8</ecNumber>
    </recommendedName>
    <alternativeName>
        <fullName evidence="1">N-acetyl-L-glutamate 5-phosphotransferase</fullName>
    </alternativeName>
    <alternativeName>
        <fullName evidence="1">NAG kinase</fullName>
        <shortName evidence="1">NAGK</shortName>
    </alternativeName>
</protein>
<evidence type="ECO:0000255" key="1">
    <source>
        <dbReference type="HAMAP-Rule" id="MF_00082"/>
    </source>
</evidence>
<comment type="function">
    <text evidence="1">Catalyzes the ATP-dependent phosphorylation of N-acetyl-L-glutamate.</text>
</comment>
<comment type="catalytic activity">
    <reaction evidence="1">
        <text>N-acetyl-L-glutamate + ATP = N-acetyl-L-glutamyl 5-phosphate + ADP</text>
        <dbReference type="Rhea" id="RHEA:14629"/>
        <dbReference type="ChEBI" id="CHEBI:30616"/>
        <dbReference type="ChEBI" id="CHEBI:44337"/>
        <dbReference type="ChEBI" id="CHEBI:57936"/>
        <dbReference type="ChEBI" id="CHEBI:456216"/>
        <dbReference type="EC" id="2.7.2.8"/>
    </reaction>
</comment>
<comment type="pathway">
    <text evidence="1">Amino-acid biosynthesis; L-arginine biosynthesis; N(2)-acetyl-L-ornithine from L-glutamate: step 2/4.</text>
</comment>
<comment type="subcellular location">
    <subcellularLocation>
        <location evidence="1">Cytoplasm</location>
    </subcellularLocation>
</comment>
<comment type="similarity">
    <text evidence="1">Belongs to the acetylglutamate kinase family. ArgB subfamily.</text>
</comment>
<feature type="chain" id="PRO_1000075303" description="Acetylglutamate kinase">
    <location>
        <begin position="1"/>
        <end position="296"/>
    </location>
</feature>
<feature type="binding site" evidence="1">
    <location>
        <begin position="67"/>
        <end position="68"/>
    </location>
    <ligand>
        <name>substrate</name>
    </ligand>
</feature>
<feature type="binding site" evidence="1">
    <location>
        <position position="89"/>
    </location>
    <ligand>
        <name>substrate</name>
    </ligand>
</feature>
<feature type="binding site" evidence="1">
    <location>
        <position position="194"/>
    </location>
    <ligand>
        <name>substrate</name>
    </ligand>
</feature>
<feature type="site" description="Transition state stabilizer" evidence="1">
    <location>
        <position position="32"/>
    </location>
</feature>
<feature type="site" description="Transition state stabilizer" evidence="1">
    <location>
        <position position="254"/>
    </location>
</feature>
<reference key="1">
    <citation type="submission" date="2007-10" db="EMBL/GenBank/DDBJ databases">
        <title>Brucella canis ATCC 23365 whole genome shotgun sequencing project.</title>
        <authorList>
            <person name="Setubal J.C."/>
            <person name="Bowns C."/>
            <person name="Boyle S."/>
            <person name="Crasta O.R."/>
            <person name="Czar M.J."/>
            <person name="Dharmanolla C."/>
            <person name="Gillespie J.J."/>
            <person name="Kenyon R.W."/>
            <person name="Lu J."/>
            <person name="Mane S."/>
            <person name="Mohapatra S."/>
            <person name="Nagrani S."/>
            <person name="Purkayastha A."/>
            <person name="Rajasimha H.K."/>
            <person name="Shallom J.M."/>
            <person name="Shallom S."/>
            <person name="Shukla M."/>
            <person name="Snyder E.E."/>
            <person name="Sobral B.W."/>
            <person name="Wattam A.R."/>
            <person name="Will R."/>
            <person name="Williams K."/>
            <person name="Yoo H."/>
            <person name="Bruce D."/>
            <person name="Detter C."/>
            <person name="Munk C."/>
            <person name="Brettin T.S."/>
        </authorList>
    </citation>
    <scope>NUCLEOTIDE SEQUENCE [LARGE SCALE GENOMIC DNA]</scope>
    <source>
        <strain>ATCC 23365 / NCTC 10854 / RM-666</strain>
    </source>
</reference>
<sequence>MTTLENPEMQAQLLSAALPYMQRYENKHVVVKYGGHAMGNPELGKAFARDVALLKQSGVNPIVVHGGGPQIQAMLTKLGIESRFEGGLRVTDEKTVEVVEMVLAGSINKEIVALINAEGEWAIGLCGKDGNMVFAQKAHKTVIDPDSNIEKVLDLGFVGEPAEVDRTLLDLLARSEMIPVIAPVAPGRDGHTYNINADTFAGAIAGALAATRLLFLTDVPGVLDKDKKLIKELSVADAQALIRDGTISGGMIPKVETCIDAIRRGVEGVVILNGKTPHSVLLELFTEHGAGTLIVP</sequence>
<gene>
    <name evidence="1" type="primary">argB</name>
    <name type="ordered locus">BCAN_B1046</name>
</gene>
<accession>A9MCV1</accession>
<keyword id="KW-0028">Amino-acid biosynthesis</keyword>
<keyword id="KW-0055">Arginine biosynthesis</keyword>
<keyword id="KW-0067">ATP-binding</keyword>
<keyword id="KW-0963">Cytoplasm</keyword>
<keyword id="KW-0418">Kinase</keyword>
<keyword id="KW-0547">Nucleotide-binding</keyword>
<keyword id="KW-1185">Reference proteome</keyword>
<keyword id="KW-0808">Transferase</keyword>